<gene>
    <name evidence="1" type="primary">pyrI</name>
    <name type="ordered locus">SFV_4248</name>
</gene>
<sequence length="153" mass="17135">MTHDNKLQVEAIKRGTVIDHIPAQIGFKLLSLFKLTETDQRITIGLNLPSGEMGRKDLIKIENTFLSEEQVDQLALYAPQATVNRIDNYEVVGKSRPSLPERIDNVLVCPNSNCISHAEPVSSSFAVRKRANDIALKCKYCEKEFSHNVVLAN</sequence>
<comment type="function">
    <text evidence="1">Involved in allosteric regulation of aspartate carbamoyltransferase.</text>
</comment>
<comment type="cofactor">
    <cofactor evidence="1">
        <name>Zn(2+)</name>
        <dbReference type="ChEBI" id="CHEBI:29105"/>
    </cofactor>
    <text evidence="1">Binds 1 zinc ion per subunit.</text>
</comment>
<comment type="subunit">
    <text evidence="1">Contains catalytic and regulatory chains.</text>
</comment>
<comment type="similarity">
    <text evidence="1">Belongs to the PyrI family.</text>
</comment>
<protein>
    <recommendedName>
        <fullName evidence="1">Aspartate carbamoyltransferase regulatory chain</fullName>
    </recommendedName>
</protein>
<keyword id="KW-0479">Metal-binding</keyword>
<keyword id="KW-0665">Pyrimidine biosynthesis</keyword>
<keyword id="KW-0862">Zinc</keyword>
<dbReference type="EMBL" id="CP000266">
    <property type="protein sequence ID" value="ABF06230.1"/>
    <property type="molecule type" value="Genomic_DNA"/>
</dbReference>
<dbReference type="RefSeq" id="WP_000148585.1">
    <property type="nucleotide sequence ID" value="NC_008258.1"/>
</dbReference>
<dbReference type="SMR" id="Q0SXI5"/>
<dbReference type="KEGG" id="sfv:SFV_4248"/>
<dbReference type="HOGENOM" id="CLU_128576_0_0_6"/>
<dbReference type="Proteomes" id="UP000000659">
    <property type="component" value="Chromosome"/>
</dbReference>
<dbReference type="GO" id="GO:0009347">
    <property type="term" value="C:aspartate carbamoyltransferase complex"/>
    <property type="evidence" value="ECO:0007669"/>
    <property type="project" value="InterPro"/>
</dbReference>
<dbReference type="GO" id="GO:0046872">
    <property type="term" value="F:metal ion binding"/>
    <property type="evidence" value="ECO:0007669"/>
    <property type="project" value="UniProtKB-KW"/>
</dbReference>
<dbReference type="GO" id="GO:0006207">
    <property type="term" value="P:'de novo' pyrimidine nucleobase biosynthetic process"/>
    <property type="evidence" value="ECO:0007669"/>
    <property type="project" value="InterPro"/>
</dbReference>
<dbReference type="GO" id="GO:0006221">
    <property type="term" value="P:pyrimidine nucleotide biosynthetic process"/>
    <property type="evidence" value="ECO:0007669"/>
    <property type="project" value="UniProtKB-UniRule"/>
</dbReference>
<dbReference type="FunFam" id="2.30.30.20:FF:000001">
    <property type="entry name" value="Aspartate carbamoyltransferase regulatory chain"/>
    <property type="match status" value="1"/>
</dbReference>
<dbReference type="FunFam" id="3.30.70.140:FF:000001">
    <property type="entry name" value="Aspartate carbamoyltransferase regulatory chain"/>
    <property type="match status" value="1"/>
</dbReference>
<dbReference type="Gene3D" id="2.30.30.20">
    <property type="entry name" value="Aspartate carbamoyltransferase regulatory subunit, C-terminal domain"/>
    <property type="match status" value="1"/>
</dbReference>
<dbReference type="Gene3D" id="3.30.70.140">
    <property type="entry name" value="Aspartate carbamoyltransferase regulatory subunit, N-terminal domain"/>
    <property type="match status" value="1"/>
</dbReference>
<dbReference type="HAMAP" id="MF_00002">
    <property type="entry name" value="Asp_carb_tr_reg"/>
    <property type="match status" value="1"/>
</dbReference>
<dbReference type="InterPro" id="IPR020545">
    <property type="entry name" value="Asp_carbamoyltransf_reg_N"/>
</dbReference>
<dbReference type="InterPro" id="IPR002801">
    <property type="entry name" value="Asp_carbamoylTrfase_reg"/>
</dbReference>
<dbReference type="InterPro" id="IPR020542">
    <property type="entry name" value="Asp_carbamoyltrfase_reg_C"/>
</dbReference>
<dbReference type="InterPro" id="IPR036792">
    <property type="entry name" value="Asp_carbatrfase_reg_C_sf"/>
</dbReference>
<dbReference type="InterPro" id="IPR036793">
    <property type="entry name" value="Asp_carbatrfase_reg_N_sf"/>
</dbReference>
<dbReference type="NCBIfam" id="TIGR00240">
    <property type="entry name" value="ATCase_reg"/>
    <property type="match status" value="1"/>
</dbReference>
<dbReference type="PANTHER" id="PTHR35805">
    <property type="entry name" value="ASPARTATE CARBAMOYLTRANSFERASE REGULATORY CHAIN"/>
    <property type="match status" value="1"/>
</dbReference>
<dbReference type="PANTHER" id="PTHR35805:SF1">
    <property type="entry name" value="ASPARTATE CARBAMOYLTRANSFERASE REGULATORY CHAIN"/>
    <property type="match status" value="1"/>
</dbReference>
<dbReference type="Pfam" id="PF01948">
    <property type="entry name" value="PyrI"/>
    <property type="match status" value="1"/>
</dbReference>
<dbReference type="Pfam" id="PF02748">
    <property type="entry name" value="PyrI_C"/>
    <property type="match status" value="1"/>
</dbReference>
<dbReference type="SUPFAM" id="SSF57825">
    <property type="entry name" value="Aspartate carbamoyltransferase, Regulatory-chain, C-terminal domain"/>
    <property type="match status" value="1"/>
</dbReference>
<dbReference type="SUPFAM" id="SSF54893">
    <property type="entry name" value="Aspartate carbamoyltransferase, Regulatory-chain, N-terminal domain"/>
    <property type="match status" value="1"/>
</dbReference>
<evidence type="ECO:0000255" key="1">
    <source>
        <dbReference type="HAMAP-Rule" id="MF_00002"/>
    </source>
</evidence>
<feature type="chain" id="PRO_1000000050" description="Aspartate carbamoyltransferase regulatory chain">
    <location>
        <begin position="1"/>
        <end position="153"/>
    </location>
</feature>
<feature type="binding site" evidence="1">
    <location>
        <position position="109"/>
    </location>
    <ligand>
        <name>Zn(2+)</name>
        <dbReference type="ChEBI" id="CHEBI:29105"/>
    </ligand>
</feature>
<feature type="binding site" evidence="1">
    <location>
        <position position="114"/>
    </location>
    <ligand>
        <name>Zn(2+)</name>
        <dbReference type="ChEBI" id="CHEBI:29105"/>
    </ligand>
</feature>
<feature type="binding site" evidence="1">
    <location>
        <position position="138"/>
    </location>
    <ligand>
        <name>Zn(2+)</name>
        <dbReference type="ChEBI" id="CHEBI:29105"/>
    </ligand>
</feature>
<feature type="binding site" evidence="1">
    <location>
        <position position="141"/>
    </location>
    <ligand>
        <name>Zn(2+)</name>
        <dbReference type="ChEBI" id="CHEBI:29105"/>
    </ligand>
</feature>
<accession>Q0SXI5</accession>
<reference key="1">
    <citation type="journal article" date="2006" name="BMC Genomics">
        <title>Complete genome sequence of Shigella flexneri 5b and comparison with Shigella flexneri 2a.</title>
        <authorList>
            <person name="Nie H."/>
            <person name="Yang F."/>
            <person name="Zhang X."/>
            <person name="Yang J."/>
            <person name="Chen L."/>
            <person name="Wang J."/>
            <person name="Xiong Z."/>
            <person name="Peng J."/>
            <person name="Sun L."/>
            <person name="Dong J."/>
            <person name="Xue Y."/>
            <person name="Xu X."/>
            <person name="Chen S."/>
            <person name="Yao Z."/>
            <person name="Shen Y."/>
            <person name="Jin Q."/>
        </authorList>
    </citation>
    <scope>NUCLEOTIDE SEQUENCE [LARGE SCALE GENOMIC DNA]</scope>
    <source>
        <strain>8401</strain>
    </source>
</reference>
<proteinExistence type="inferred from homology"/>
<name>PYRI_SHIF8</name>
<organism>
    <name type="scientific">Shigella flexneri serotype 5b (strain 8401)</name>
    <dbReference type="NCBI Taxonomy" id="373384"/>
    <lineage>
        <taxon>Bacteria</taxon>
        <taxon>Pseudomonadati</taxon>
        <taxon>Pseudomonadota</taxon>
        <taxon>Gammaproteobacteria</taxon>
        <taxon>Enterobacterales</taxon>
        <taxon>Enterobacteriaceae</taxon>
        <taxon>Shigella</taxon>
    </lineage>
</organism>